<comment type="function">
    <text>May be involved in cell-cell interactions.</text>
</comment>
<comment type="subcellular location">
    <subcellularLocation>
        <location evidence="9">Secreted</location>
    </subcellularLocation>
</comment>
<comment type="similarity">
    <text evidence="9">Belongs to the peptidase M14 family.</text>
</comment>
<comment type="caution">
    <text evidence="9">Although related to peptidase M14 family, lacks the active site residues and zinc-binding sites, suggesting that it has no carboxypeptidase activity.</text>
</comment>
<sequence>MSRPGTATPALALVLLAVTLAGVGAQGAALEDPDYYGQEIWSREPYYARPEPELETFSPPLPAGPGEEWERRPQEPRPPKRATKPKKAPKREKSAPEPPPPGKHSNKKVMRTKSSEKAANDDHSVRVAREDVRESCPPLGLETLKITDFQLHASTVKRYGLGAHRGRLNIQAGINENDFYDGAWCAGRNDLQQWIEVDARRLTRFTGVITQGRNSLWLSDWVTSYKVMVSNDSHTWVTVKNGSGDMIFEGNSEKEIPVLNELPVPMVARYIRINPQSWFDNGSICMRMEILGCPLPDPNNYYHRRNEMTTTDDLDFKHHNYKEMRQLMKVVNEMCPNITRIYNIGKSHQGLKLYAVEISDHPGEHEVGEPEFHYIAGAHGNEVLGRELLLLLVQFVCQEYLARNARIVHLVEETRIHVLPSLNPDGYEKAYEGGSELGGWSLGRWTHDGIDINNNFPDLNTLLWEAEDRQNVPRKVPNHYIAIPEWFLSENATVAAETRAVIAWMEKIPFVLGGNLQGGELVVAYPYDLVRSPWKTQEHTPTPDDHVFRWLAYSYASTHRLMTDARRRVCHTEDFQKEEGTVNGASWHTVAGSLNDFSYLHTNCFELSIYVGCDKYPHESQLPEEWENNRESLIVFMEQVHRGIKGLVRDSHGKGIPNAIISVEGINHDIRTANDGDYWRLLNPGEYVVTAKAEGFTASTKNCMVGYDMGATRCDFTLSKTNMARIREIMEKFGKQPVSLPARRLKLRGQKRRQRG</sequence>
<feature type="signal peptide" evidence="1">
    <location>
        <begin position="1"/>
        <end position="25"/>
    </location>
</feature>
<feature type="chain" id="PRO_0000004409" description="Inactive carboxypeptidase-like protein X2">
    <location>
        <begin position="26"/>
        <end position="756"/>
    </location>
</feature>
<feature type="domain" description="F5/8 type C" evidence="2">
    <location>
        <begin position="134"/>
        <end position="293"/>
    </location>
</feature>
<feature type="domain" description="Peptidase M14" evidence="3">
    <location>
        <begin position="317"/>
        <end position="640"/>
    </location>
</feature>
<feature type="region of interest" description="Disordered" evidence="4">
    <location>
        <begin position="51"/>
        <end position="131"/>
    </location>
</feature>
<feature type="compositionally biased region" description="Basic and acidic residues" evidence="4">
    <location>
        <begin position="68"/>
        <end position="78"/>
    </location>
</feature>
<feature type="compositionally biased region" description="Basic residues" evidence="4">
    <location>
        <begin position="79"/>
        <end position="90"/>
    </location>
</feature>
<feature type="compositionally biased region" description="Basic and acidic residues" evidence="4">
    <location>
        <begin position="113"/>
        <end position="131"/>
    </location>
</feature>
<feature type="glycosylation site" description="N-linked (GlcNAc...) asparagine" evidence="1">
    <location>
        <position position="231"/>
    </location>
</feature>
<feature type="glycosylation site" description="N-linked (GlcNAc...) asparagine" evidence="1">
    <location>
        <position position="241"/>
    </location>
</feature>
<feature type="glycosylation site" description="N-linked (GlcNAc...) asparagine" evidence="1">
    <location>
        <position position="281"/>
    </location>
</feature>
<feature type="glycosylation site" description="N-linked (GlcNAc...) asparagine" evidence="1">
    <location>
        <position position="337"/>
    </location>
</feature>
<feature type="glycosylation site" description="N-linked (GlcNAc...) asparagine" evidence="1">
    <location>
        <position position="491"/>
    </location>
</feature>
<feature type="disulfide bond" evidence="2">
    <location>
        <begin position="136"/>
        <end position="293"/>
    </location>
</feature>
<feature type="sequence variant" id="VAR_048603" description="In dbSNP:rs7088479." evidence="5 6 7 8">
    <original>Q</original>
    <variation>R</variation>
    <location>
        <position position="750"/>
    </location>
</feature>
<protein>
    <recommendedName>
        <fullName>Inactive carboxypeptidase-like protein X2</fullName>
    </recommendedName>
</protein>
<organism>
    <name type="scientific">Homo sapiens</name>
    <name type="common">Human</name>
    <dbReference type="NCBI Taxonomy" id="9606"/>
    <lineage>
        <taxon>Eukaryota</taxon>
        <taxon>Metazoa</taxon>
        <taxon>Chordata</taxon>
        <taxon>Craniata</taxon>
        <taxon>Vertebrata</taxon>
        <taxon>Euteleostomi</taxon>
        <taxon>Mammalia</taxon>
        <taxon>Eutheria</taxon>
        <taxon>Euarchontoglires</taxon>
        <taxon>Primates</taxon>
        <taxon>Haplorrhini</taxon>
        <taxon>Catarrhini</taxon>
        <taxon>Hominidae</taxon>
        <taxon>Homo</taxon>
    </lineage>
</organism>
<evidence type="ECO:0000255" key="1"/>
<evidence type="ECO:0000255" key="2">
    <source>
        <dbReference type="PROSITE-ProRule" id="PRU00081"/>
    </source>
</evidence>
<evidence type="ECO:0000255" key="3">
    <source>
        <dbReference type="PROSITE-ProRule" id="PRU01379"/>
    </source>
</evidence>
<evidence type="ECO:0000256" key="4">
    <source>
        <dbReference type="SAM" id="MobiDB-lite"/>
    </source>
</evidence>
<evidence type="ECO:0000269" key="5">
    <source>
    </source>
</evidence>
<evidence type="ECO:0000269" key="6">
    <source>
    </source>
</evidence>
<evidence type="ECO:0000269" key="7">
    <source>
    </source>
</evidence>
<evidence type="ECO:0000269" key="8">
    <source ref="3"/>
</evidence>
<evidence type="ECO:0000305" key="9"/>
<gene>
    <name type="primary">CPXM2</name>
    <name type="synonym">CPX2</name>
    <name type="ORF">UNQ676/PRO1310</name>
</gene>
<dbReference type="EMBL" id="AY358565">
    <property type="protein sequence ID" value="AAQ88928.1"/>
    <property type="molecule type" value="mRNA"/>
</dbReference>
<dbReference type="EMBL" id="AK304814">
    <property type="protein sequence ID" value="BAG65564.1"/>
    <property type="molecule type" value="mRNA"/>
</dbReference>
<dbReference type="EMBL" id="AC009987">
    <property type="status" value="NOT_ANNOTATED_CDS"/>
    <property type="molecule type" value="Genomic_DNA"/>
</dbReference>
<dbReference type="EMBL" id="AC068058">
    <property type="status" value="NOT_ANNOTATED_CDS"/>
    <property type="molecule type" value="Genomic_DNA"/>
</dbReference>
<dbReference type="EMBL" id="CH471066">
    <property type="protein sequence ID" value="EAW49279.1"/>
    <property type="molecule type" value="Genomic_DNA"/>
</dbReference>
<dbReference type="EMBL" id="BC036789">
    <property type="protein sequence ID" value="AAH36789.2"/>
    <property type="molecule type" value="mRNA"/>
</dbReference>
<dbReference type="EMBL" id="BC137492">
    <property type="protein sequence ID" value="AAI37493.1"/>
    <property type="molecule type" value="mRNA"/>
</dbReference>
<dbReference type="EMBL" id="BC146862">
    <property type="protein sequence ID" value="AAI46863.1"/>
    <property type="molecule type" value="mRNA"/>
</dbReference>
<dbReference type="CCDS" id="CCDS7637.1"/>
<dbReference type="RefSeq" id="NP_937791.2">
    <property type="nucleotide sequence ID" value="NM_198148.3"/>
</dbReference>
<dbReference type="SMR" id="Q8N436"/>
<dbReference type="BioGRID" id="125646">
    <property type="interactions" value="8"/>
</dbReference>
<dbReference type="FunCoup" id="Q8N436">
    <property type="interactions" value="38"/>
</dbReference>
<dbReference type="IntAct" id="Q8N436">
    <property type="interactions" value="2"/>
</dbReference>
<dbReference type="STRING" id="9606.ENSP00000241305"/>
<dbReference type="MEROPS" id="M14.955"/>
<dbReference type="GlyConnect" id="1395">
    <property type="glycosylation" value="6 N-Linked glycans (2 sites)"/>
</dbReference>
<dbReference type="GlyCosmos" id="Q8N436">
    <property type="glycosylation" value="7 sites, 6 glycans"/>
</dbReference>
<dbReference type="GlyGen" id="Q8N436">
    <property type="glycosylation" value="8 sites, 18 N-linked glycans (2 sites), 1 O-linked glycan (2 sites)"/>
</dbReference>
<dbReference type="iPTMnet" id="Q8N436"/>
<dbReference type="PhosphoSitePlus" id="Q8N436"/>
<dbReference type="BioMuta" id="CPXM2"/>
<dbReference type="DMDM" id="296439384"/>
<dbReference type="MassIVE" id="Q8N436"/>
<dbReference type="PaxDb" id="9606-ENSP00000241305"/>
<dbReference type="PeptideAtlas" id="Q8N436"/>
<dbReference type="ProteomicsDB" id="71876"/>
<dbReference type="Antibodypedia" id="32356">
    <property type="antibodies" value="122 antibodies from 30 providers"/>
</dbReference>
<dbReference type="DNASU" id="119587"/>
<dbReference type="Ensembl" id="ENST00000241305.4">
    <property type="protein sequence ID" value="ENSP00000241305.3"/>
    <property type="gene ID" value="ENSG00000121898.13"/>
</dbReference>
<dbReference type="GeneID" id="119587"/>
<dbReference type="KEGG" id="hsa:119587"/>
<dbReference type="MANE-Select" id="ENST00000241305.4">
    <property type="protein sequence ID" value="ENSP00000241305.3"/>
    <property type="RefSeq nucleotide sequence ID" value="NM_198148.3"/>
    <property type="RefSeq protein sequence ID" value="NP_937791.2"/>
</dbReference>
<dbReference type="UCSC" id="uc001lhk.2">
    <property type="organism name" value="human"/>
</dbReference>
<dbReference type="AGR" id="HGNC:26977"/>
<dbReference type="CTD" id="119587"/>
<dbReference type="DisGeNET" id="119587"/>
<dbReference type="GeneCards" id="CPXM2"/>
<dbReference type="HGNC" id="HGNC:26977">
    <property type="gene designation" value="CPXM2"/>
</dbReference>
<dbReference type="HPA" id="ENSG00000121898">
    <property type="expression patterns" value="Tissue enhanced (choroid)"/>
</dbReference>
<dbReference type="MIM" id="617348">
    <property type="type" value="gene"/>
</dbReference>
<dbReference type="neXtProt" id="NX_Q8N436"/>
<dbReference type="OpenTargets" id="ENSG00000121898"/>
<dbReference type="PharmGKB" id="PA134866722"/>
<dbReference type="VEuPathDB" id="HostDB:ENSG00000121898"/>
<dbReference type="eggNOG" id="KOG2649">
    <property type="taxonomic scope" value="Eukaryota"/>
</dbReference>
<dbReference type="GeneTree" id="ENSGT00940000156414"/>
<dbReference type="HOGENOM" id="CLU_006722_4_0_1"/>
<dbReference type="InParanoid" id="Q8N436"/>
<dbReference type="OMA" id="QHGKGIP"/>
<dbReference type="OrthoDB" id="10249045at2759"/>
<dbReference type="PAN-GO" id="Q8N436">
    <property type="GO annotations" value="4 GO annotations based on evolutionary models"/>
</dbReference>
<dbReference type="PhylomeDB" id="Q8N436"/>
<dbReference type="TreeFam" id="TF315592"/>
<dbReference type="PathwayCommons" id="Q8N436"/>
<dbReference type="BioGRID-ORCS" id="119587">
    <property type="hits" value="8 hits in 1140 CRISPR screens"/>
</dbReference>
<dbReference type="ChiTaRS" id="CPXM2">
    <property type="organism name" value="human"/>
</dbReference>
<dbReference type="GenomeRNAi" id="119587"/>
<dbReference type="Pharos" id="Q8N436">
    <property type="development level" value="Tbio"/>
</dbReference>
<dbReference type="PRO" id="PR:Q8N436"/>
<dbReference type="Proteomes" id="UP000005640">
    <property type="component" value="Chromosome 10"/>
</dbReference>
<dbReference type="RNAct" id="Q8N436">
    <property type="molecule type" value="protein"/>
</dbReference>
<dbReference type="Bgee" id="ENSG00000121898">
    <property type="expression patterns" value="Expressed in right coronary artery and 171 other cell types or tissues"/>
</dbReference>
<dbReference type="ExpressionAtlas" id="Q8N436">
    <property type="expression patterns" value="baseline and differential"/>
</dbReference>
<dbReference type="GO" id="GO:0005576">
    <property type="term" value="C:extracellular region"/>
    <property type="evidence" value="ECO:0007669"/>
    <property type="project" value="UniProtKB-SubCell"/>
</dbReference>
<dbReference type="GO" id="GO:0004181">
    <property type="term" value="F:metallocarboxypeptidase activity"/>
    <property type="evidence" value="ECO:0007669"/>
    <property type="project" value="InterPro"/>
</dbReference>
<dbReference type="GO" id="GO:0008270">
    <property type="term" value="F:zinc ion binding"/>
    <property type="evidence" value="ECO:0007669"/>
    <property type="project" value="InterPro"/>
</dbReference>
<dbReference type="GO" id="GO:0006508">
    <property type="term" value="P:proteolysis"/>
    <property type="evidence" value="ECO:0007669"/>
    <property type="project" value="InterPro"/>
</dbReference>
<dbReference type="CDD" id="cd00057">
    <property type="entry name" value="FA58C"/>
    <property type="match status" value="1"/>
</dbReference>
<dbReference type="CDD" id="cd03869">
    <property type="entry name" value="M14_CPX_like"/>
    <property type="match status" value="1"/>
</dbReference>
<dbReference type="CDD" id="cd11308">
    <property type="entry name" value="Peptidase_M14NE-CP-C_like"/>
    <property type="match status" value="1"/>
</dbReference>
<dbReference type="FunFam" id="3.40.630.10:FF:000007">
    <property type="entry name" value="Carboxypeptidase X (M14 family), member 1"/>
    <property type="match status" value="1"/>
</dbReference>
<dbReference type="FunFam" id="2.60.40.1120:FF:000007">
    <property type="entry name" value="Carboxypeptidase X, M14 family member 2"/>
    <property type="match status" value="1"/>
</dbReference>
<dbReference type="FunFam" id="2.60.120.260:FF:000035">
    <property type="entry name" value="probable carboxypeptidase X1 isoform X2"/>
    <property type="match status" value="1"/>
</dbReference>
<dbReference type="Gene3D" id="2.60.40.1120">
    <property type="entry name" value="Carboxypeptidase-like, regulatory domain"/>
    <property type="match status" value="1"/>
</dbReference>
<dbReference type="Gene3D" id="2.60.120.260">
    <property type="entry name" value="Galactose-binding domain-like"/>
    <property type="match status" value="1"/>
</dbReference>
<dbReference type="Gene3D" id="3.40.630.10">
    <property type="entry name" value="Zn peptidases"/>
    <property type="match status" value="1"/>
</dbReference>
<dbReference type="InterPro" id="IPR008969">
    <property type="entry name" value="CarboxyPept-like_regulatory"/>
</dbReference>
<dbReference type="InterPro" id="IPR000421">
    <property type="entry name" value="FA58C"/>
</dbReference>
<dbReference type="InterPro" id="IPR008979">
    <property type="entry name" value="Galactose-bd-like_sf"/>
</dbReference>
<dbReference type="InterPro" id="IPR000834">
    <property type="entry name" value="Peptidase_M14"/>
</dbReference>
<dbReference type="InterPro" id="IPR050753">
    <property type="entry name" value="Peptidase_M14_domain"/>
</dbReference>
<dbReference type="PANTHER" id="PTHR11532:SF45">
    <property type="entry name" value="INACTIVE CARBOXYPEPTIDASE-LIKE PROTEIN X2"/>
    <property type="match status" value="1"/>
</dbReference>
<dbReference type="PANTHER" id="PTHR11532">
    <property type="entry name" value="PROTEASE M14 CARBOXYPEPTIDASE"/>
    <property type="match status" value="1"/>
</dbReference>
<dbReference type="Pfam" id="PF13620">
    <property type="entry name" value="CarboxypepD_reg"/>
    <property type="match status" value="1"/>
</dbReference>
<dbReference type="Pfam" id="PF00754">
    <property type="entry name" value="F5_F8_type_C"/>
    <property type="match status" value="1"/>
</dbReference>
<dbReference type="Pfam" id="PF00246">
    <property type="entry name" value="Peptidase_M14"/>
    <property type="match status" value="1"/>
</dbReference>
<dbReference type="PRINTS" id="PR00765">
    <property type="entry name" value="CRBOXYPTASEA"/>
</dbReference>
<dbReference type="SMART" id="SM00231">
    <property type="entry name" value="FA58C"/>
    <property type="match status" value="1"/>
</dbReference>
<dbReference type="SMART" id="SM00631">
    <property type="entry name" value="Zn_pept"/>
    <property type="match status" value="1"/>
</dbReference>
<dbReference type="SUPFAM" id="SSF49464">
    <property type="entry name" value="Carboxypeptidase regulatory domain-like"/>
    <property type="match status" value="1"/>
</dbReference>
<dbReference type="SUPFAM" id="SSF49785">
    <property type="entry name" value="Galactose-binding domain-like"/>
    <property type="match status" value="1"/>
</dbReference>
<dbReference type="SUPFAM" id="SSF53187">
    <property type="entry name" value="Zn-dependent exopeptidases"/>
    <property type="match status" value="1"/>
</dbReference>
<dbReference type="PROSITE" id="PS00132">
    <property type="entry name" value="CARBOXYPEPT_ZN_1"/>
    <property type="match status" value="1"/>
</dbReference>
<dbReference type="PROSITE" id="PS01285">
    <property type="entry name" value="FA58C_1"/>
    <property type="match status" value="1"/>
</dbReference>
<dbReference type="PROSITE" id="PS01286">
    <property type="entry name" value="FA58C_2"/>
    <property type="match status" value="1"/>
</dbReference>
<dbReference type="PROSITE" id="PS50022">
    <property type="entry name" value="FA58C_3"/>
    <property type="match status" value="1"/>
</dbReference>
<dbReference type="PROSITE" id="PS52035">
    <property type="entry name" value="PEPTIDASE_M14"/>
    <property type="match status" value="1"/>
</dbReference>
<proteinExistence type="evidence at protein level"/>
<accession>Q8N436</accession>
<accession>B4E3Q2</accession>
<name>CPXM2_HUMAN</name>
<keyword id="KW-1015">Disulfide bond</keyword>
<keyword id="KW-0325">Glycoprotein</keyword>
<keyword id="KW-1267">Proteomics identification</keyword>
<keyword id="KW-1185">Reference proteome</keyword>
<keyword id="KW-0964">Secreted</keyword>
<keyword id="KW-0732">Signal</keyword>
<reference key="1">
    <citation type="journal article" date="2003" name="Genome Res.">
        <title>The secreted protein discovery initiative (SPDI), a large-scale effort to identify novel human secreted and transmembrane proteins: a bioinformatics assessment.</title>
        <authorList>
            <person name="Clark H.F."/>
            <person name="Gurney A.L."/>
            <person name="Abaya E."/>
            <person name="Baker K."/>
            <person name="Baldwin D.T."/>
            <person name="Brush J."/>
            <person name="Chen J."/>
            <person name="Chow B."/>
            <person name="Chui C."/>
            <person name="Crowley C."/>
            <person name="Currell B."/>
            <person name="Deuel B."/>
            <person name="Dowd P."/>
            <person name="Eaton D."/>
            <person name="Foster J.S."/>
            <person name="Grimaldi C."/>
            <person name="Gu Q."/>
            <person name="Hass P.E."/>
            <person name="Heldens S."/>
            <person name="Huang A."/>
            <person name="Kim H.S."/>
            <person name="Klimowski L."/>
            <person name="Jin Y."/>
            <person name="Johnson S."/>
            <person name="Lee J."/>
            <person name="Lewis L."/>
            <person name="Liao D."/>
            <person name="Mark M.R."/>
            <person name="Robbie E."/>
            <person name="Sanchez C."/>
            <person name="Schoenfeld J."/>
            <person name="Seshagiri S."/>
            <person name="Simmons L."/>
            <person name="Singh J."/>
            <person name="Smith V."/>
            <person name="Stinson J."/>
            <person name="Vagts A."/>
            <person name="Vandlen R.L."/>
            <person name="Watanabe C."/>
            <person name="Wieand D."/>
            <person name="Woods K."/>
            <person name="Xie M.-H."/>
            <person name="Yansura D.G."/>
            <person name="Yi S."/>
            <person name="Yu G."/>
            <person name="Yuan J."/>
            <person name="Zhang M."/>
            <person name="Zhang Z."/>
            <person name="Goddard A.D."/>
            <person name="Wood W.I."/>
            <person name="Godowski P.J."/>
            <person name="Gray A.M."/>
        </authorList>
    </citation>
    <scope>NUCLEOTIDE SEQUENCE [LARGE SCALE MRNA]</scope>
    <scope>VARIANT ARG-750</scope>
</reference>
<reference key="2">
    <citation type="journal article" date="2004" name="Nat. Genet.">
        <title>Complete sequencing and characterization of 21,243 full-length human cDNAs.</title>
        <authorList>
            <person name="Ota T."/>
            <person name="Suzuki Y."/>
            <person name="Nishikawa T."/>
            <person name="Otsuki T."/>
            <person name="Sugiyama T."/>
            <person name="Irie R."/>
            <person name="Wakamatsu A."/>
            <person name="Hayashi K."/>
            <person name="Sato H."/>
            <person name="Nagai K."/>
            <person name="Kimura K."/>
            <person name="Makita H."/>
            <person name="Sekine M."/>
            <person name="Obayashi M."/>
            <person name="Nishi T."/>
            <person name="Shibahara T."/>
            <person name="Tanaka T."/>
            <person name="Ishii S."/>
            <person name="Yamamoto J."/>
            <person name="Saito K."/>
            <person name="Kawai Y."/>
            <person name="Isono Y."/>
            <person name="Nakamura Y."/>
            <person name="Nagahari K."/>
            <person name="Murakami K."/>
            <person name="Yasuda T."/>
            <person name="Iwayanagi T."/>
            <person name="Wagatsuma M."/>
            <person name="Shiratori A."/>
            <person name="Sudo H."/>
            <person name="Hosoiri T."/>
            <person name="Kaku Y."/>
            <person name="Kodaira H."/>
            <person name="Kondo H."/>
            <person name="Sugawara M."/>
            <person name="Takahashi M."/>
            <person name="Kanda K."/>
            <person name="Yokoi T."/>
            <person name="Furuya T."/>
            <person name="Kikkawa E."/>
            <person name="Omura Y."/>
            <person name="Abe K."/>
            <person name="Kamihara K."/>
            <person name="Katsuta N."/>
            <person name="Sato K."/>
            <person name="Tanikawa M."/>
            <person name="Yamazaki M."/>
            <person name="Ninomiya K."/>
            <person name="Ishibashi T."/>
            <person name="Yamashita H."/>
            <person name="Murakawa K."/>
            <person name="Fujimori K."/>
            <person name="Tanai H."/>
            <person name="Kimata M."/>
            <person name="Watanabe M."/>
            <person name="Hiraoka S."/>
            <person name="Chiba Y."/>
            <person name="Ishida S."/>
            <person name="Ono Y."/>
            <person name="Takiguchi S."/>
            <person name="Watanabe S."/>
            <person name="Yosida M."/>
            <person name="Hotuta T."/>
            <person name="Kusano J."/>
            <person name="Kanehori K."/>
            <person name="Takahashi-Fujii A."/>
            <person name="Hara H."/>
            <person name="Tanase T.-O."/>
            <person name="Nomura Y."/>
            <person name="Togiya S."/>
            <person name="Komai F."/>
            <person name="Hara R."/>
            <person name="Takeuchi K."/>
            <person name="Arita M."/>
            <person name="Imose N."/>
            <person name="Musashino K."/>
            <person name="Yuuki H."/>
            <person name="Oshima A."/>
            <person name="Sasaki N."/>
            <person name="Aotsuka S."/>
            <person name="Yoshikawa Y."/>
            <person name="Matsunawa H."/>
            <person name="Ichihara T."/>
            <person name="Shiohata N."/>
            <person name="Sano S."/>
            <person name="Moriya S."/>
            <person name="Momiyama H."/>
            <person name="Satoh N."/>
            <person name="Takami S."/>
            <person name="Terashima Y."/>
            <person name="Suzuki O."/>
            <person name="Nakagawa S."/>
            <person name="Senoh A."/>
            <person name="Mizoguchi H."/>
            <person name="Goto Y."/>
            <person name="Shimizu F."/>
            <person name="Wakebe H."/>
            <person name="Hishigaki H."/>
            <person name="Watanabe T."/>
            <person name="Sugiyama A."/>
            <person name="Takemoto M."/>
            <person name="Kawakami B."/>
            <person name="Yamazaki M."/>
            <person name="Watanabe K."/>
            <person name="Kumagai A."/>
            <person name="Itakura S."/>
            <person name="Fukuzumi Y."/>
            <person name="Fujimori Y."/>
            <person name="Komiyama M."/>
            <person name="Tashiro H."/>
            <person name="Tanigami A."/>
            <person name="Fujiwara T."/>
            <person name="Ono T."/>
            <person name="Yamada K."/>
            <person name="Fujii Y."/>
            <person name="Ozaki K."/>
            <person name="Hirao M."/>
            <person name="Ohmori Y."/>
            <person name="Kawabata A."/>
            <person name="Hikiji T."/>
            <person name="Kobatake N."/>
            <person name="Inagaki H."/>
            <person name="Ikema Y."/>
            <person name="Okamoto S."/>
            <person name="Okitani R."/>
            <person name="Kawakami T."/>
            <person name="Noguchi S."/>
            <person name="Itoh T."/>
            <person name="Shigeta K."/>
            <person name="Senba T."/>
            <person name="Matsumura K."/>
            <person name="Nakajima Y."/>
            <person name="Mizuno T."/>
            <person name="Morinaga M."/>
            <person name="Sasaki M."/>
            <person name="Togashi T."/>
            <person name="Oyama M."/>
            <person name="Hata H."/>
            <person name="Watanabe M."/>
            <person name="Komatsu T."/>
            <person name="Mizushima-Sugano J."/>
            <person name="Satoh T."/>
            <person name="Shirai Y."/>
            <person name="Takahashi Y."/>
            <person name="Nakagawa K."/>
            <person name="Okumura K."/>
            <person name="Nagase T."/>
            <person name="Nomura N."/>
            <person name="Kikuchi H."/>
            <person name="Masuho Y."/>
            <person name="Yamashita R."/>
            <person name="Nakai K."/>
            <person name="Yada T."/>
            <person name="Nakamura Y."/>
            <person name="Ohara O."/>
            <person name="Isogai T."/>
            <person name="Sugano S."/>
        </authorList>
    </citation>
    <scope>NUCLEOTIDE SEQUENCE [LARGE SCALE MRNA]</scope>
    <scope>VARIANT ARG-750</scope>
    <source>
        <tissue>Uterus</tissue>
    </source>
</reference>
<reference key="3">
    <citation type="submission" date="2005-09" db="EMBL/GenBank/DDBJ databases">
        <authorList>
            <person name="Mural R.J."/>
            <person name="Istrail S."/>
            <person name="Sutton G."/>
            <person name="Florea L."/>
            <person name="Halpern A.L."/>
            <person name="Mobarry C.M."/>
            <person name="Lippert R."/>
            <person name="Walenz B."/>
            <person name="Shatkay H."/>
            <person name="Dew I."/>
            <person name="Miller J.R."/>
            <person name="Flanigan M.J."/>
            <person name="Edwards N.J."/>
            <person name="Bolanos R."/>
            <person name="Fasulo D."/>
            <person name="Halldorsson B.V."/>
            <person name="Hannenhalli S."/>
            <person name="Turner R."/>
            <person name="Yooseph S."/>
            <person name="Lu F."/>
            <person name="Nusskern D.R."/>
            <person name="Shue B.C."/>
            <person name="Zheng X.H."/>
            <person name="Zhong F."/>
            <person name="Delcher A.L."/>
            <person name="Huson D.H."/>
            <person name="Kravitz S.A."/>
            <person name="Mouchard L."/>
            <person name="Reinert K."/>
            <person name="Remington K.A."/>
            <person name="Clark A.G."/>
            <person name="Waterman M.S."/>
            <person name="Eichler E.E."/>
            <person name="Adams M.D."/>
            <person name="Hunkapiller M.W."/>
            <person name="Myers E.W."/>
            <person name="Venter J.C."/>
        </authorList>
    </citation>
    <scope>NUCLEOTIDE SEQUENCE [LARGE SCALE GENOMIC DNA]</scope>
    <scope>VARIANT ARG-750</scope>
</reference>
<reference key="4">
    <citation type="journal article" date="2004" name="Nature">
        <title>The DNA sequence and comparative analysis of human chromosome 10.</title>
        <authorList>
            <person name="Deloukas P."/>
            <person name="Earthrowl M.E."/>
            <person name="Grafham D.V."/>
            <person name="Rubenfield M."/>
            <person name="French L."/>
            <person name="Steward C.A."/>
            <person name="Sims S.K."/>
            <person name="Jones M.C."/>
            <person name="Searle S."/>
            <person name="Scott C."/>
            <person name="Howe K."/>
            <person name="Hunt S.E."/>
            <person name="Andrews T.D."/>
            <person name="Gilbert J.G.R."/>
            <person name="Swarbreck D."/>
            <person name="Ashurst J.L."/>
            <person name="Taylor A."/>
            <person name="Battles J."/>
            <person name="Bird C.P."/>
            <person name="Ainscough R."/>
            <person name="Almeida J.P."/>
            <person name="Ashwell R.I.S."/>
            <person name="Ambrose K.D."/>
            <person name="Babbage A.K."/>
            <person name="Bagguley C.L."/>
            <person name="Bailey J."/>
            <person name="Banerjee R."/>
            <person name="Bates K."/>
            <person name="Beasley H."/>
            <person name="Bray-Allen S."/>
            <person name="Brown A.J."/>
            <person name="Brown J.Y."/>
            <person name="Burford D.C."/>
            <person name="Burrill W."/>
            <person name="Burton J."/>
            <person name="Cahill P."/>
            <person name="Camire D."/>
            <person name="Carter N.P."/>
            <person name="Chapman J.C."/>
            <person name="Clark S.Y."/>
            <person name="Clarke G."/>
            <person name="Clee C.M."/>
            <person name="Clegg S."/>
            <person name="Corby N."/>
            <person name="Coulson A."/>
            <person name="Dhami P."/>
            <person name="Dutta I."/>
            <person name="Dunn M."/>
            <person name="Faulkner L."/>
            <person name="Frankish A."/>
            <person name="Frankland J.A."/>
            <person name="Garner P."/>
            <person name="Garnett J."/>
            <person name="Gribble S."/>
            <person name="Griffiths C."/>
            <person name="Grocock R."/>
            <person name="Gustafson E."/>
            <person name="Hammond S."/>
            <person name="Harley J.L."/>
            <person name="Hart E."/>
            <person name="Heath P.D."/>
            <person name="Ho T.P."/>
            <person name="Hopkins B."/>
            <person name="Horne J."/>
            <person name="Howden P.J."/>
            <person name="Huckle E."/>
            <person name="Hynds C."/>
            <person name="Johnson C."/>
            <person name="Johnson D."/>
            <person name="Kana A."/>
            <person name="Kay M."/>
            <person name="Kimberley A.M."/>
            <person name="Kershaw J.K."/>
            <person name="Kokkinaki M."/>
            <person name="Laird G.K."/>
            <person name="Lawlor S."/>
            <person name="Lee H.M."/>
            <person name="Leongamornlert D.A."/>
            <person name="Laird G."/>
            <person name="Lloyd C."/>
            <person name="Lloyd D.M."/>
            <person name="Loveland J."/>
            <person name="Lovell J."/>
            <person name="McLaren S."/>
            <person name="McLay K.E."/>
            <person name="McMurray A."/>
            <person name="Mashreghi-Mohammadi M."/>
            <person name="Matthews L."/>
            <person name="Milne S."/>
            <person name="Nickerson T."/>
            <person name="Nguyen M."/>
            <person name="Overton-Larty E."/>
            <person name="Palmer S.A."/>
            <person name="Pearce A.V."/>
            <person name="Peck A.I."/>
            <person name="Pelan S."/>
            <person name="Phillimore B."/>
            <person name="Porter K."/>
            <person name="Rice C.M."/>
            <person name="Rogosin A."/>
            <person name="Ross M.T."/>
            <person name="Sarafidou T."/>
            <person name="Sehra H.K."/>
            <person name="Shownkeen R."/>
            <person name="Skuce C.D."/>
            <person name="Smith M."/>
            <person name="Standring L."/>
            <person name="Sycamore N."/>
            <person name="Tester J."/>
            <person name="Thorpe A."/>
            <person name="Torcasso W."/>
            <person name="Tracey A."/>
            <person name="Tromans A."/>
            <person name="Tsolas J."/>
            <person name="Wall M."/>
            <person name="Walsh J."/>
            <person name="Wang H."/>
            <person name="Weinstock K."/>
            <person name="West A.P."/>
            <person name="Willey D.L."/>
            <person name="Whitehead S.L."/>
            <person name="Wilming L."/>
            <person name="Wray P.W."/>
            <person name="Young L."/>
            <person name="Chen Y."/>
            <person name="Lovering R.C."/>
            <person name="Moschonas N.K."/>
            <person name="Siebert R."/>
            <person name="Fechtel K."/>
            <person name="Bentley D."/>
            <person name="Durbin R.M."/>
            <person name="Hubbard T."/>
            <person name="Doucette-Stamm L."/>
            <person name="Beck S."/>
            <person name="Smith D.R."/>
            <person name="Rogers J."/>
        </authorList>
    </citation>
    <scope>NUCLEOTIDE SEQUENCE [LARGE SCALE GENOMIC DNA]</scope>
</reference>
<reference key="5">
    <citation type="journal article" date="2004" name="Genome Res.">
        <title>The status, quality, and expansion of the NIH full-length cDNA project: the Mammalian Gene Collection (MGC).</title>
        <authorList>
            <consortium name="The MGC Project Team"/>
        </authorList>
    </citation>
    <scope>NUCLEOTIDE SEQUENCE [LARGE SCALE MRNA]</scope>
    <scope>VARIANT ARG-750</scope>
    <source>
        <tissue>Brain</tissue>
        <tissue>Lung</tissue>
        <tissue>Testis</tissue>
    </source>
</reference>